<keyword id="KW-0067">ATP-binding</keyword>
<keyword id="KW-0119">Carbohydrate metabolism</keyword>
<keyword id="KW-0418">Kinase</keyword>
<keyword id="KW-0460">Magnesium</keyword>
<keyword id="KW-0479">Metal-binding</keyword>
<keyword id="KW-0511">Multifunctional enzyme</keyword>
<keyword id="KW-0547">Nucleotide-binding</keyword>
<keyword id="KW-1185">Reference proteome</keyword>
<keyword id="KW-0723">Serine/threonine-protein kinase</keyword>
<keyword id="KW-0808">Transferase</keyword>
<feature type="chain" id="PRO_1000067179" description="HPr kinase/phosphorylase">
    <location>
        <begin position="1"/>
        <end position="309"/>
    </location>
</feature>
<feature type="region of interest" description="Important for the catalytic mechanism of both phosphorylation and dephosphorylation" evidence="1">
    <location>
        <begin position="201"/>
        <end position="210"/>
    </location>
</feature>
<feature type="region of interest" description="Important for the catalytic mechanism of dephosphorylation" evidence="1">
    <location>
        <begin position="264"/>
        <end position="269"/>
    </location>
</feature>
<feature type="active site" evidence="1">
    <location>
        <position position="138"/>
    </location>
</feature>
<feature type="active site" evidence="1">
    <location>
        <position position="159"/>
    </location>
</feature>
<feature type="active site" description="Proton acceptor; for phosphorylation activity. Proton donor; for dephosphorylation activity" evidence="1">
    <location>
        <position position="177"/>
    </location>
</feature>
<feature type="active site" evidence="1">
    <location>
        <position position="243"/>
    </location>
</feature>
<feature type="binding site" evidence="1">
    <location>
        <begin position="153"/>
        <end position="160"/>
    </location>
    <ligand>
        <name>ATP</name>
        <dbReference type="ChEBI" id="CHEBI:30616"/>
    </ligand>
</feature>
<feature type="binding site" evidence="1">
    <location>
        <position position="160"/>
    </location>
    <ligand>
        <name>Mg(2+)</name>
        <dbReference type="ChEBI" id="CHEBI:18420"/>
    </ligand>
</feature>
<feature type="binding site" evidence="1">
    <location>
        <position position="202"/>
    </location>
    <ligand>
        <name>Mg(2+)</name>
        <dbReference type="ChEBI" id="CHEBI:18420"/>
    </ligand>
</feature>
<sequence length="309" mass="34358">MTVTVKMLVDKLKLKVVYGNEELLAKAITTADISRPGLEMVGYFDYYSPERLQLVGMKEWTYLKTMTANNRYSVFANIFREETPAVIVARGLEIPEEMLQAAKENGVAVLQGRNSTSSLSGDMSWYLNSQLAERTSVHGVLVDIYGMGVLIQGDSGIGKSETALELVKRGHRLVADDRVDVYAKDEGTLWGEPAEILLHLLEIRGVGIIDVMSLYGASAVRDSSQVQLCICLEHFENDEVFDRLGNSNEEIELQGVKIPRIRIPVKTGRNVSVVIEAAAMNYRAKQMGYDATKTFKDRLTDLISKNGED</sequence>
<name>HPRK_STRT2</name>
<protein>
    <recommendedName>
        <fullName evidence="1">HPr kinase/phosphorylase</fullName>
        <shortName evidence="1">HPrK/P</shortName>
        <ecNumber evidence="1">2.7.11.-</ecNumber>
        <ecNumber evidence="1">2.7.4.-</ecNumber>
    </recommendedName>
    <alternativeName>
        <fullName evidence="1">HPr(Ser) kinase/phosphorylase</fullName>
    </alternativeName>
</protein>
<gene>
    <name evidence="1" type="primary">hprK</name>
    <name type="ordered locus">stu0666</name>
</gene>
<comment type="function">
    <text evidence="1">Catalyzes the ATP- as well as the pyrophosphate-dependent phosphorylation of a specific serine residue in HPr, a phosphocarrier protein of the phosphoenolpyruvate-dependent sugar phosphotransferase system (PTS). HprK/P also catalyzes the pyrophosphate-producing, inorganic phosphate-dependent dephosphorylation (phosphorolysis) of seryl-phosphorylated HPr (P-Ser-HPr). The two antagonistic activities of HprK/P are regulated by several intracellular metabolites, which change their concentration in response to the absence or presence of rapidly metabolisable carbon sources (glucose, fructose, etc.) in the growth medium. Therefore, by controlling the phosphorylation state of HPr, HPrK/P is a sensor enzyme that plays a major role in the regulation of carbon metabolism and sugar transport: it mediates carbon catabolite repression (CCR), and regulates PTS-catalyzed carbohydrate uptake and inducer exclusion.</text>
</comment>
<comment type="catalytic activity">
    <reaction evidence="1">
        <text>[HPr protein]-L-serine + ATP = [HPr protein]-O-phospho-L-serine + ADP + H(+)</text>
        <dbReference type="Rhea" id="RHEA:46600"/>
        <dbReference type="Rhea" id="RHEA-COMP:11602"/>
        <dbReference type="Rhea" id="RHEA-COMP:11603"/>
        <dbReference type="ChEBI" id="CHEBI:15378"/>
        <dbReference type="ChEBI" id="CHEBI:29999"/>
        <dbReference type="ChEBI" id="CHEBI:30616"/>
        <dbReference type="ChEBI" id="CHEBI:83421"/>
        <dbReference type="ChEBI" id="CHEBI:456216"/>
    </reaction>
</comment>
<comment type="catalytic activity">
    <reaction evidence="1">
        <text>[HPr protein]-O-phospho-L-serine + phosphate + H(+) = [HPr protein]-L-serine + diphosphate</text>
        <dbReference type="Rhea" id="RHEA:46604"/>
        <dbReference type="Rhea" id="RHEA-COMP:11602"/>
        <dbReference type="Rhea" id="RHEA-COMP:11603"/>
        <dbReference type="ChEBI" id="CHEBI:15378"/>
        <dbReference type="ChEBI" id="CHEBI:29999"/>
        <dbReference type="ChEBI" id="CHEBI:33019"/>
        <dbReference type="ChEBI" id="CHEBI:43474"/>
        <dbReference type="ChEBI" id="CHEBI:83421"/>
    </reaction>
</comment>
<comment type="cofactor">
    <cofactor evidence="1">
        <name>Mg(2+)</name>
        <dbReference type="ChEBI" id="CHEBI:18420"/>
    </cofactor>
</comment>
<comment type="subunit">
    <text evidence="1">Homohexamer.</text>
</comment>
<comment type="domain">
    <text evidence="1">The Walker A ATP-binding motif also binds Pi and PPi.</text>
</comment>
<comment type="miscellaneous">
    <text evidence="1">Both phosphorylation and phosphorolysis are carried out by the same active site and suggest a common mechanism for both reactions.</text>
</comment>
<comment type="similarity">
    <text evidence="1">Belongs to the HPrK/P family.</text>
</comment>
<accession>Q5M533</accession>
<reference key="1">
    <citation type="journal article" date="2004" name="Nat. Biotechnol.">
        <title>Complete sequence and comparative genome analysis of the dairy bacterium Streptococcus thermophilus.</title>
        <authorList>
            <person name="Bolotin A."/>
            <person name="Quinquis B."/>
            <person name="Renault P."/>
            <person name="Sorokin A."/>
            <person name="Ehrlich S.D."/>
            <person name="Kulakauskas S."/>
            <person name="Lapidus A."/>
            <person name="Goltsman E."/>
            <person name="Mazur M."/>
            <person name="Pusch G.D."/>
            <person name="Fonstein M."/>
            <person name="Overbeek R."/>
            <person name="Kyprides N."/>
            <person name="Purnelle B."/>
            <person name="Prozzi D."/>
            <person name="Ngui K."/>
            <person name="Masuy D."/>
            <person name="Hancy F."/>
            <person name="Burteau S."/>
            <person name="Boutry M."/>
            <person name="Delcour J."/>
            <person name="Goffeau A."/>
            <person name="Hols P."/>
        </authorList>
    </citation>
    <scope>NUCLEOTIDE SEQUENCE [LARGE SCALE GENOMIC DNA]</scope>
    <source>
        <strain>ATCC BAA-250 / LMG 18311</strain>
    </source>
</reference>
<dbReference type="EC" id="2.7.11.-" evidence="1"/>
<dbReference type="EC" id="2.7.4.-" evidence="1"/>
<dbReference type="EMBL" id="CP000023">
    <property type="protein sequence ID" value="AAV60371.1"/>
    <property type="molecule type" value="Genomic_DNA"/>
</dbReference>
<dbReference type="RefSeq" id="WP_011225733.1">
    <property type="nucleotide sequence ID" value="NC_006448.1"/>
</dbReference>
<dbReference type="SMR" id="Q5M533"/>
<dbReference type="STRING" id="264199.stu0666"/>
<dbReference type="KEGG" id="stl:stu0666"/>
<dbReference type="PATRIC" id="fig|264199.4.peg.678"/>
<dbReference type="eggNOG" id="COG1493">
    <property type="taxonomic scope" value="Bacteria"/>
</dbReference>
<dbReference type="HOGENOM" id="CLU_052030_0_1_9"/>
<dbReference type="Proteomes" id="UP000001170">
    <property type="component" value="Chromosome"/>
</dbReference>
<dbReference type="GO" id="GO:0005524">
    <property type="term" value="F:ATP binding"/>
    <property type="evidence" value="ECO:0007669"/>
    <property type="project" value="UniProtKB-UniRule"/>
</dbReference>
<dbReference type="GO" id="GO:0000287">
    <property type="term" value="F:magnesium ion binding"/>
    <property type="evidence" value="ECO:0007669"/>
    <property type="project" value="UniProtKB-UniRule"/>
</dbReference>
<dbReference type="GO" id="GO:0000155">
    <property type="term" value="F:phosphorelay sensor kinase activity"/>
    <property type="evidence" value="ECO:0007669"/>
    <property type="project" value="InterPro"/>
</dbReference>
<dbReference type="GO" id="GO:0004674">
    <property type="term" value="F:protein serine/threonine kinase activity"/>
    <property type="evidence" value="ECO:0007669"/>
    <property type="project" value="UniProtKB-KW"/>
</dbReference>
<dbReference type="GO" id="GO:0004712">
    <property type="term" value="F:protein serine/threonine/tyrosine kinase activity"/>
    <property type="evidence" value="ECO:0007669"/>
    <property type="project" value="UniProtKB-UniRule"/>
</dbReference>
<dbReference type="GO" id="GO:0006109">
    <property type="term" value="P:regulation of carbohydrate metabolic process"/>
    <property type="evidence" value="ECO:0007669"/>
    <property type="project" value="UniProtKB-UniRule"/>
</dbReference>
<dbReference type="CDD" id="cd01918">
    <property type="entry name" value="HprK_C"/>
    <property type="match status" value="1"/>
</dbReference>
<dbReference type="FunFam" id="3.40.50.300:FF:000174">
    <property type="entry name" value="HPr kinase/phosphorylase"/>
    <property type="match status" value="1"/>
</dbReference>
<dbReference type="Gene3D" id="3.40.1390.20">
    <property type="entry name" value="HprK N-terminal domain-like"/>
    <property type="match status" value="1"/>
</dbReference>
<dbReference type="Gene3D" id="3.40.50.300">
    <property type="entry name" value="P-loop containing nucleotide triphosphate hydrolases"/>
    <property type="match status" value="1"/>
</dbReference>
<dbReference type="HAMAP" id="MF_01249">
    <property type="entry name" value="HPr_kinase"/>
    <property type="match status" value="1"/>
</dbReference>
<dbReference type="InterPro" id="IPR003755">
    <property type="entry name" value="HPr(Ser)_kin/Pase"/>
</dbReference>
<dbReference type="InterPro" id="IPR011104">
    <property type="entry name" value="Hpr_kin/Pase_C"/>
</dbReference>
<dbReference type="InterPro" id="IPR011126">
    <property type="entry name" value="Hpr_kin/Pase_Hpr_N"/>
</dbReference>
<dbReference type="InterPro" id="IPR027417">
    <property type="entry name" value="P-loop_NTPase"/>
</dbReference>
<dbReference type="InterPro" id="IPR028979">
    <property type="entry name" value="Ser_kin/Pase_Hpr-like_N_sf"/>
</dbReference>
<dbReference type="NCBIfam" id="TIGR00679">
    <property type="entry name" value="hpr-ser"/>
    <property type="match status" value="1"/>
</dbReference>
<dbReference type="PANTHER" id="PTHR30305:SF1">
    <property type="entry name" value="HPR KINASE_PHOSPHORYLASE"/>
    <property type="match status" value="1"/>
</dbReference>
<dbReference type="PANTHER" id="PTHR30305">
    <property type="entry name" value="PROTEIN YJDM-RELATED"/>
    <property type="match status" value="1"/>
</dbReference>
<dbReference type="Pfam" id="PF07475">
    <property type="entry name" value="Hpr_kinase_C"/>
    <property type="match status" value="1"/>
</dbReference>
<dbReference type="Pfam" id="PF02603">
    <property type="entry name" value="Hpr_kinase_N"/>
    <property type="match status" value="1"/>
</dbReference>
<dbReference type="SUPFAM" id="SSF75138">
    <property type="entry name" value="HprK N-terminal domain-like"/>
    <property type="match status" value="1"/>
</dbReference>
<dbReference type="SUPFAM" id="SSF53795">
    <property type="entry name" value="PEP carboxykinase-like"/>
    <property type="match status" value="1"/>
</dbReference>
<evidence type="ECO:0000255" key="1">
    <source>
        <dbReference type="HAMAP-Rule" id="MF_01249"/>
    </source>
</evidence>
<proteinExistence type="inferred from homology"/>
<organism>
    <name type="scientific">Streptococcus thermophilus (strain ATCC BAA-250 / LMG 18311)</name>
    <dbReference type="NCBI Taxonomy" id="264199"/>
    <lineage>
        <taxon>Bacteria</taxon>
        <taxon>Bacillati</taxon>
        <taxon>Bacillota</taxon>
        <taxon>Bacilli</taxon>
        <taxon>Lactobacillales</taxon>
        <taxon>Streptococcaceae</taxon>
        <taxon>Streptococcus</taxon>
    </lineage>
</organism>